<comment type="function">
    <text evidence="1">Essential cell division protein. May link together the upstream cell division proteins, which are predominantly cytoplasmic, with the downstream cell division proteins, which are predominantly periplasmic.</text>
</comment>
<comment type="subunit">
    <text evidence="1">Part of a complex composed of FtsB, FtsL and FtsQ.</text>
</comment>
<comment type="subcellular location">
    <subcellularLocation>
        <location evidence="1">Cell inner membrane</location>
        <topology evidence="1">Single-pass type II membrane protein</topology>
    </subcellularLocation>
    <text evidence="1">Localizes to the division septum where it forms a ring structure.</text>
</comment>
<comment type="similarity">
    <text evidence="1">Belongs to the FtsL family.</text>
</comment>
<sequence>MMLTNRQIRVRLFESLKNSFFKKTVGISFALLFILLITAFSLIVVRFEYKLQLNEQKNLILEDTRLDEQWSQIVLEYSSLATPTAVEKFAQKEKMTLPTRKTIGFLNEQKEELNNE</sequence>
<name>FTSL_FRATT</name>
<protein>
    <recommendedName>
        <fullName evidence="1">Cell division protein FtsL</fullName>
    </recommendedName>
</protein>
<organism>
    <name type="scientific">Francisella tularensis subsp. tularensis (strain SCHU S4 / Schu 4)</name>
    <dbReference type="NCBI Taxonomy" id="177416"/>
    <lineage>
        <taxon>Bacteria</taxon>
        <taxon>Pseudomonadati</taxon>
        <taxon>Pseudomonadota</taxon>
        <taxon>Gammaproteobacteria</taxon>
        <taxon>Thiotrichales</taxon>
        <taxon>Francisellaceae</taxon>
        <taxon>Francisella</taxon>
    </lineage>
</organism>
<feature type="chain" id="PRO_0000414557" description="Cell division protein FtsL">
    <location>
        <begin position="1"/>
        <end position="116"/>
    </location>
</feature>
<feature type="topological domain" description="Cytoplasmic" evidence="1">
    <location>
        <begin position="1"/>
        <end position="24"/>
    </location>
</feature>
<feature type="transmembrane region" description="Helical" evidence="1">
    <location>
        <begin position="25"/>
        <end position="45"/>
    </location>
</feature>
<feature type="topological domain" description="Periplasmic" evidence="1">
    <location>
        <begin position="46"/>
        <end position="116"/>
    </location>
</feature>
<reference key="1">
    <citation type="journal article" date="2005" name="Nat. Genet.">
        <title>The complete genome sequence of Francisella tularensis, the causative agent of tularemia.</title>
        <authorList>
            <person name="Larsson P."/>
            <person name="Oyston P.C.F."/>
            <person name="Chain P."/>
            <person name="Chu M.C."/>
            <person name="Duffield M."/>
            <person name="Fuxelius H.-H."/>
            <person name="Garcia E."/>
            <person name="Haelltorp G."/>
            <person name="Johansson D."/>
            <person name="Isherwood K.E."/>
            <person name="Karp P.D."/>
            <person name="Larsson E."/>
            <person name="Liu Y."/>
            <person name="Michell S."/>
            <person name="Prior J."/>
            <person name="Prior R."/>
            <person name="Malfatti S."/>
            <person name="Sjoestedt A."/>
            <person name="Svensson K."/>
            <person name="Thompson N."/>
            <person name="Vergez L."/>
            <person name="Wagg J.K."/>
            <person name="Wren B.W."/>
            <person name="Lindler L.E."/>
            <person name="Andersson S.G.E."/>
            <person name="Forsman M."/>
            <person name="Titball R.W."/>
        </authorList>
    </citation>
    <scope>NUCLEOTIDE SEQUENCE [LARGE SCALE GENOMIC DNA]</scope>
    <source>
        <strain>SCHU S4 / Schu 4</strain>
    </source>
</reference>
<proteinExistence type="inferred from homology"/>
<dbReference type="EMBL" id="AJ749949">
    <property type="protein sequence ID" value="CAG45329.1"/>
    <property type="molecule type" value="Genomic_DNA"/>
</dbReference>
<dbReference type="RefSeq" id="WP_003020494.1">
    <property type="nucleotide sequence ID" value="NZ_CP010290.1"/>
</dbReference>
<dbReference type="RefSeq" id="YP_169712.1">
    <property type="nucleotide sequence ID" value="NC_006570.2"/>
</dbReference>
<dbReference type="SMR" id="Q5NGY0"/>
<dbReference type="STRING" id="177416.FTT_0696"/>
<dbReference type="DNASU" id="3191028"/>
<dbReference type="EnsemblBacteria" id="CAG45329">
    <property type="protein sequence ID" value="CAG45329"/>
    <property type="gene ID" value="FTT_0696"/>
</dbReference>
<dbReference type="GeneID" id="75263909"/>
<dbReference type="KEGG" id="ftu:FTT_0696"/>
<dbReference type="eggNOG" id="COG3116">
    <property type="taxonomic scope" value="Bacteria"/>
</dbReference>
<dbReference type="OrthoDB" id="5605583at2"/>
<dbReference type="Proteomes" id="UP000001174">
    <property type="component" value="Chromosome"/>
</dbReference>
<dbReference type="GO" id="GO:0032153">
    <property type="term" value="C:cell division site"/>
    <property type="evidence" value="ECO:0007669"/>
    <property type="project" value="UniProtKB-UniRule"/>
</dbReference>
<dbReference type="GO" id="GO:0005886">
    <property type="term" value="C:plasma membrane"/>
    <property type="evidence" value="ECO:0007669"/>
    <property type="project" value="UniProtKB-SubCell"/>
</dbReference>
<dbReference type="GO" id="GO:0043093">
    <property type="term" value="P:FtsZ-dependent cytokinesis"/>
    <property type="evidence" value="ECO:0007669"/>
    <property type="project" value="UniProtKB-UniRule"/>
</dbReference>
<dbReference type="HAMAP" id="MF_00910">
    <property type="entry name" value="FtsL"/>
    <property type="match status" value="1"/>
</dbReference>
<dbReference type="InterPro" id="IPR011922">
    <property type="entry name" value="Cell_div_FtsL"/>
</dbReference>
<dbReference type="NCBIfam" id="TIGR02209">
    <property type="entry name" value="ftsL_broad"/>
    <property type="match status" value="1"/>
</dbReference>
<dbReference type="Pfam" id="PF04999">
    <property type="entry name" value="FtsL"/>
    <property type="match status" value="1"/>
</dbReference>
<gene>
    <name evidence="1" type="primary">ftsL</name>
    <name type="ordered locus">FTT_0696</name>
</gene>
<keyword id="KW-0131">Cell cycle</keyword>
<keyword id="KW-0132">Cell division</keyword>
<keyword id="KW-0997">Cell inner membrane</keyword>
<keyword id="KW-1003">Cell membrane</keyword>
<keyword id="KW-0472">Membrane</keyword>
<keyword id="KW-1185">Reference proteome</keyword>
<keyword id="KW-0812">Transmembrane</keyword>
<keyword id="KW-1133">Transmembrane helix</keyword>
<accession>Q5NGY0</accession>
<evidence type="ECO:0000255" key="1">
    <source>
        <dbReference type="HAMAP-Rule" id="MF_00910"/>
    </source>
</evidence>